<accession>B6I1U1</accession>
<organism>
    <name type="scientific">Escherichia coli (strain SE11)</name>
    <dbReference type="NCBI Taxonomy" id="409438"/>
    <lineage>
        <taxon>Bacteria</taxon>
        <taxon>Pseudomonadati</taxon>
        <taxon>Pseudomonadota</taxon>
        <taxon>Gammaproteobacteria</taxon>
        <taxon>Enterobacterales</taxon>
        <taxon>Enterobacteriaceae</taxon>
        <taxon>Escherichia</taxon>
    </lineage>
</organism>
<proteinExistence type="inferred from homology"/>
<reference key="1">
    <citation type="journal article" date="2008" name="DNA Res.">
        <title>Complete genome sequence and comparative analysis of the wild-type commensal Escherichia coli strain SE11 isolated from a healthy adult.</title>
        <authorList>
            <person name="Oshima K."/>
            <person name="Toh H."/>
            <person name="Ogura Y."/>
            <person name="Sasamoto H."/>
            <person name="Morita H."/>
            <person name="Park S.-H."/>
            <person name="Ooka T."/>
            <person name="Iyoda S."/>
            <person name="Taylor T.D."/>
            <person name="Hayashi T."/>
            <person name="Itoh K."/>
            <person name="Hattori M."/>
        </authorList>
    </citation>
    <scope>NUCLEOTIDE SEQUENCE [LARGE SCALE GENOMIC DNA]</scope>
    <source>
        <strain>SE11</strain>
    </source>
</reference>
<protein>
    <recommendedName>
        <fullName evidence="1">Putative N-acetylmannosamine-6-phosphate 2-epimerase</fullName>
        <ecNumber evidence="1">5.1.3.9</ecNumber>
    </recommendedName>
    <alternativeName>
        <fullName evidence="1">ManNAc-6-P epimerase</fullName>
    </alternativeName>
</protein>
<evidence type="ECO:0000255" key="1">
    <source>
        <dbReference type="HAMAP-Rule" id="MF_01235"/>
    </source>
</evidence>
<comment type="function">
    <text evidence="1">Converts N-acetylmannosamine-6-phosphate (ManNAc-6-P) to N-acetylglucosamine-6-phosphate (GlcNAc-6-P).</text>
</comment>
<comment type="catalytic activity">
    <reaction evidence="1">
        <text>an N-acyl-D-glucosamine 6-phosphate = an N-acyl-D-mannosamine 6-phosphate</text>
        <dbReference type="Rhea" id="RHEA:23932"/>
        <dbReference type="ChEBI" id="CHEBI:57599"/>
        <dbReference type="ChEBI" id="CHEBI:57666"/>
        <dbReference type="EC" id="5.1.3.9"/>
    </reaction>
</comment>
<comment type="pathway">
    <text evidence="1">Amino-sugar metabolism; N-acetylneuraminate degradation; D-fructose 6-phosphate from N-acetylneuraminate: step 3/5.</text>
</comment>
<comment type="similarity">
    <text evidence="1">Belongs to the NanE family.</text>
</comment>
<sequence>MSLLAQLDQKIAANGGLIVSCQPVPDSPLDKPEIVAAMALAAEQAGAVAIRIEGVANLQATRAVVSVPIIGIVKRDLEDSPVRITAYIEDVDALAQAGADIIAIDGTDRPRPVPVETLLARIHHHGLLAMTDCSTPEDGLACQKLGAEIIGTTLSGYTTPETPEEPDLALVKTLSDAGCRVIAEGRYNTPAQAADAMRHGAWAVTVGSAITRLEHICQWYNTAMKKAVL</sequence>
<feature type="chain" id="PRO_1000139709" description="Putative N-acetylmannosamine-6-phosphate 2-epimerase">
    <location>
        <begin position="1"/>
        <end position="229"/>
    </location>
</feature>
<name>NANE_ECOSE</name>
<dbReference type="EC" id="5.1.3.9" evidence="1"/>
<dbReference type="EMBL" id="AP009240">
    <property type="protein sequence ID" value="BAG79026.1"/>
    <property type="molecule type" value="Genomic_DNA"/>
</dbReference>
<dbReference type="RefSeq" id="WP_000054239.1">
    <property type="nucleotide sequence ID" value="NC_011415.1"/>
</dbReference>
<dbReference type="SMR" id="B6I1U1"/>
<dbReference type="KEGG" id="ecy:ECSE_3502"/>
<dbReference type="HOGENOM" id="CLU_086300_0_0_6"/>
<dbReference type="UniPathway" id="UPA00629">
    <property type="reaction ID" value="UER00682"/>
</dbReference>
<dbReference type="Proteomes" id="UP000008199">
    <property type="component" value="Chromosome"/>
</dbReference>
<dbReference type="GO" id="GO:0005829">
    <property type="term" value="C:cytosol"/>
    <property type="evidence" value="ECO:0007669"/>
    <property type="project" value="TreeGrafter"/>
</dbReference>
<dbReference type="GO" id="GO:0047465">
    <property type="term" value="F:N-acylglucosamine-6-phosphate 2-epimerase activity"/>
    <property type="evidence" value="ECO:0007669"/>
    <property type="project" value="UniProtKB-EC"/>
</dbReference>
<dbReference type="GO" id="GO:0005975">
    <property type="term" value="P:carbohydrate metabolic process"/>
    <property type="evidence" value="ECO:0007669"/>
    <property type="project" value="UniProtKB-UniRule"/>
</dbReference>
<dbReference type="GO" id="GO:0006053">
    <property type="term" value="P:N-acetylmannosamine catabolic process"/>
    <property type="evidence" value="ECO:0007669"/>
    <property type="project" value="TreeGrafter"/>
</dbReference>
<dbReference type="GO" id="GO:0019262">
    <property type="term" value="P:N-acetylneuraminate catabolic process"/>
    <property type="evidence" value="ECO:0007669"/>
    <property type="project" value="UniProtKB-UniRule"/>
</dbReference>
<dbReference type="CDD" id="cd04729">
    <property type="entry name" value="NanE"/>
    <property type="match status" value="1"/>
</dbReference>
<dbReference type="FunFam" id="3.20.20.70:FF:000035">
    <property type="entry name" value="Putative N-acetylmannosamine-6-phosphate 2-epimerase"/>
    <property type="match status" value="1"/>
</dbReference>
<dbReference type="Gene3D" id="3.20.20.70">
    <property type="entry name" value="Aldolase class I"/>
    <property type="match status" value="1"/>
</dbReference>
<dbReference type="HAMAP" id="MF_01235">
    <property type="entry name" value="ManNAc6P_epimer"/>
    <property type="match status" value="1"/>
</dbReference>
<dbReference type="InterPro" id="IPR013785">
    <property type="entry name" value="Aldolase_TIM"/>
</dbReference>
<dbReference type="InterPro" id="IPR007260">
    <property type="entry name" value="NanE"/>
</dbReference>
<dbReference type="InterPro" id="IPR011060">
    <property type="entry name" value="RibuloseP-bd_barrel"/>
</dbReference>
<dbReference type="NCBIfam" id="NF002231">
    <property type="entry name" value="PRK01130.1"/>
    <property type="match status" value="1"/>
</dbReference>
<dbReference type="PANTHER" id="PTHR36204">
    <property type="entry name" value="N-ACETYLMANNOSAMINE-6-PHOSPHATE 2-EPIMERASE-RELATED"/>
    <property type="match status" value="1"/>
</dbReference>
<dbReference type="PANTHER" id="PTHR36204:SF1">
    <property type="entry name" value="N-ACETYLMANNOSAMINE-6-PHOSPHATE 2-EPIMERASE-RELATED"/>
    <property type="match status" value="1"/>
</dbReference>
<dbReference type="Pfam" id="PF04131">
    <property type="entry name" value="NanE"/>
    <property type="match status" value="1"/>
</dbReference>
<dbReference type="SUPFAM" id="SSF51366">
    <property type="entry name" value="Ribulose-phoshate binding barrel"/>
    <property type="match status" value="1"/>
</dbReference>
<gene>
    <name evidence="1" type="primary">nanE</name>
    <name type="ordered locus">ECSE_3502</name>
</gene>
<keyword id="KW-0119">Carbohydrate metabolism</keyword>
<keyword id="KW-0413">Isomerase</keyword>